<proteinExistence type="inferred from homology"/>
<sequence>MIKEWESVIGLEVHLQLKTGTKVWCGCKSDYDESGINLHTCPICLGHPGALPKLNKKVVDYAIKAALALNCQINNESGFDRKNYFYPDAPKNYQITQFEKSYAEKGYLEFKLNSGRQVKIGITKIQIEEDTAKAVHGKNESYLNFNRASIPLIEIISEPDMRNSEEAYEYLNTLKNIIKYTKISDVSMETGSLRCDANISVMEKGSKVFGTRVEVKNLNSFKAVARAIDYEIGRQIELIQNGGKVDQETRLWDEENQITRVMRSKEEAMDYRYFNEPDLLKLVISDEEIEEIKKDMPETRLAKIERFKNNYSLDEKDAFILTEEVELSDYFEEVVKYSNNAKLSSNWILTEVLRILKHKNIDIEKFTISSENLAKIIKLIDKNTISSKIAKEVFEIALDDSRDPEIIVKEKGLVQLSDTSEIEKMVDEVLANNQKMVDDYKSADEGRKPRVLKGIVGQVMKISKGKANPEIVNDLIMEKLK</sequence>
<evidence type="ECO:0000255" key="1">
    <source>
        <dbReference type="HAMAP-Rule" id="MF_00121"/>
    </source>
</evidence>
<gene>
    <name evidence="1" type="primary">gatB</name>
    <name type="ordered locus">FN0753</name>
</gene>
<name>GATB_FUSNN</name>
<dbReference type="EC" id="6.3.5.-" evidence="1"/>
<dbReference type="EMBL" id="AE009951">
    <property type="protein sequence ID" value="AAL94949.1"/>
    <property type="molecule type" value="Genomic_DNA"/>
</dbReference>
<dbReference type="RefSeq" id="NP_603650.1">
    <property type="nucleotide sequence ID" value="NC_003454.1"/>
</dbReference>
<dbReference type="RefSeq" id="WP_011016630.1">
    <property type="nucleotide sequence ID" value="NZ_CP028101.1"/>
</dbReference>
<dbReference type="SMR" id="Q8R680"/>
<dbReference type="FunCoup" id="Q8R680">
    <property type="interactions" value="377"/>
</dbReference>
<dbReference type="STRING" id="190304.FN0753"/>
<dbReference type="PaxDb" id="190304-FN0753"/>
<dbReference type="EnsemblBacteria" id="AAL94949">
    <property type="protein sequence ID" value="AAL94949"/>
    <property type="gene ID" value="FN0753"/>
</dbReference>
<dbReference type="GeneID" id="79783745"/>
<dbReference type="KEGG" id="fnu:FN0753"/>
<dbReference type="PATRIC" id="fig|190304.8.peg.1316"/>
<dbReference type="eggNOG" id="COG0064">
    <property type="taxonomic scope" value="Bacteria"/>
</dbReference>
<dbReference type="HOGENOM" id="CLU_019240_0_0_0"/>
<dbReference type="InParanoid" id="Q8R680"/>
<dbReference type="BioCyc" id="FNUC190304:G1FZS-1339-MONOMER"/>
<dbReference type="Proteomes" id="UP000002521">
    <property type="component" value="Chromosome"/>
</dbReference>
<dbReference type="GO" id="GO:0050566">
    <property type="term" value="F:asparaginyl-tRNA synthase (glutamine-hydrolyzing) activity"/>
    <property type="evidence" value="ECO:0007669"/>
    <property type="project" value="RHEA"/>
</dbReference>
<dbReference type="GO" id="GO:0005524">
    <property type="term" value="F:ATP binding"/>
    <property type="evidence" value="ECO:0007669"/>
    <property type="project" value="UniProtKB-KW"/>
</dbReference>
<dbReference type="GO" id="GO:0050567">
    <property type="term" value="F:glutaminyl-tRNA synthase (glutamine-hydrolyzing) activity"/>
    <property type="evidence" value="ECO:0000318"/>
    <property type="project" value="GO_Central"/>
</dbReference>
<dbReference type="GO" id="GO:0070681">
    <property type="term" value="P:glutaminyl-tRNAGln biosynthesis via transamidation"/>
    <property type="evidence" value="ECO:0000318"/>
    <property type="project" value="GO_Central"/>
</dbReference>
<dbReference type="GO" id="GO:0006412">
    <property type="term" value="P:translation"/>
    <property type="evidence" value="ECO:0007669"/>
    <property type="project" value="UniProtKB-UniRule"/>
</dbReference>
<dbReference type="FunFam" id="1.10.10.410:FF:000001">
    <property type="entry name" value="Aspartyl/glutamyl-tRNA(Asn/Gln) amidotransferase subunit B"/>
    <property type="match status" value="1"/>
</dbReference>
<dbReference type="Gene3D" id="1.10.10.410">
    <property type="match status" value="1"/>
</dbReference>
<dbReference type="Gene3D" id="1.10.150.380">
    <property type="entry name" value="GatB domain, N-terminal subdomain"/>
    <property type="match status" value="1"/>
</dbReference>
<dbReference type="HAMAP" id="MF_00121">
    <property type="entry name" value="GatB"/>
    <property type="match status" value="1"/>
</dbReference>
<dbReference type="InterPro" id="IPR017959">
    <property type="entry name" value="Asn/Gln-tRNA_amidoTrfase_suB/E"/>
</dbReference>
<dbReference type="InterPro" id="IPR006075">
    <property type="entry name" value="Asn/Gln-tRNA_Trfase_suB/E_cat"/>
</dbReference>
<dbReference type="InterPro" id="IPR018027">
    <property type="entry name" value="Asn/Gln_amidotransferase"/>
</dbReference>
<dbReference type="InterPro" id="IPR003789">
    <property type="entry name" value="Asn/Gln_tRNA_amidoTrase-B-like"/>
</dbReference>
<dbReference type="InterPro" id="IPR004413">
    <property type="entry name" value="GatB"/>
</dbReference>
<dbReference type="InterPro" id="IPR042114">
    <property type="entry name" value="GatB_C_1"/>
</dbReference>
<dbReference type="InterPro" id="IPR023168">
    <property type="entry name" value="GatB_Yqey_C_2"/>
</dbReference>
<dbReference type="InterPro" id="IPR017958">
    <property type="entry name" value="Gln-tRNA_amidoTrfase_suB_CS"/>
</dbReference>
<dbReference type="InterPro" id="IPR014746">
    <property type="entry name" value="Gln_synth/guanido_kin_cat_dom"/>
</dbReference>
<dbReference type="NCBIfam" id="TIGR00133">
    <property type="entry name" value="gatB"/>
    <property type="match status" value="1"/>
</dbReference>
<dbReference type="NCBIfam" id="NF004012">
    <property type="entry name" value="PRK05477.1-2"/>
    <property type="match status" value="1"/>
</dbReference>
<dbReference type="NCBIfam" id="NF004014">
    <property type="entry name" value="PRK05477.1-4"/>
    <property type="match status" value="1"/>
</dbReference>
<dbReference type="PANTHER" id="PTHR11659">
    <property type="entry name" value="GLUTAMYL-TRNA GLN AMIDOTRANSFERASE SUBUNIT B MITOCHONDRIAL AND PROKARYOTIC PET112-RELATED"/>
    <property type="match status" value="1"/>
</dbReference>
<dbReference type="PANTHER" id="PTHR11659:SF0">
    <property type="entry name" value="GLUTAMYL-TRNA(GLN) AMIDOTRANSFERASE SUBUNIT B, MITOCHONDRIAL"/>
    <property type="match status" value="1"/>
</dbReference>
<dbReference type="Pfam" id="PF02934">
    <property type="entry name" value="GatB_N"/>
    <property type="match status" value="1"/>
</dbReference>
<dbReference type="Pfam" id="PF02637">
    <property type="entry name" value="GatB_Yqey"/>
    <property type="match status" value="1"/>
</dbReference>
<dbReference type="SMART" id="SM00845">
    <property type="entry name" value="GatB_Yqey"/>
    <property type="match status" value="1"/>
</dbReference>
<dbReference type="SUPFAM" id="SSF89095">
    <property type="entry name" value="GatB/YqeY motif"/>
    <property type="match status" value="1"/>
</dbReference>
<dbReference type="SUPFAM" id="SSF55931">
    <property type="entry name" value="Glutamine synthetase/guanido kinase"/>
    <property type="match status" value="1"/>
</dbReference>
<dbReference type="PROSITE" id="PS01234">
    <property type="entry name" value="GATB"/>
    <property type="match status" value="1"/>
</dbReference>
<feature type="chain" id="PRO_0000148790" description="Aspartyl/glutamyl-tRNA(Asn/Gln) amidotransferase subunit B">
    <location>
        <begin position="1"/>
        <end position="481"/>
    </location>
</feature>
<reference key="1">
    <citation type="journal article" date="2002" name="J. Bacteriol.">
        <title>Genome sequence and analysis of the oral bacterium Fusobacterium nucleatum strain ATCC 25586.</title>
        <authorList>
            <person name="Kapatral V."/>
            <person name="Anderson I."/>
            <person name="Ivanova N."/>
            <person name="Reznik G."/>
            <person name="Los T."/>
            <person name="Lykidis A."/>
            <person name="Bhattacharyya A."/>
            <person name="Bartman A."/>
            <person name="Gardner W."/>
            <person name="Grechkin G."/>
            <person name="Zhu L."/>
            <person name="Vasieva O."/>
            <person name="Chu L."/>
            <person name="Kogan Y."/>
            <person name="Chaga O."/>
            <person name="Goltsman E."/>
            <person name="Bernal A."/>
            <person name="Larsen N."/>
            <person name="D'Souza M."/>
            <person name="Walunas T."/>
            <person name="Pusch G."/>
            <person name="Haselkorn R."/>
            <person name="Fonstein M."/>
            <person name="Kyrpides N.C."/>
            <person name="Overbeek R."/>
        </authorList>
    </citation>
    <scope>NUCLEOTIDE SEQUENCE [LARGE SCALE GENOMIC DNA]</scope>
    <source>
        <strain>ATCC 25586 / DSM 15643 / BCRC 10681 / CIP 101130 / JCM 8532 / KCTC 2640 / LMG 13131 / VPI 4355</strain>
    </source>
</reference>
<accession>Q8R680</accession>
<keyword id="KW-0067">ATP-binding</keyword>
<keyword id="KW-0436">Ligase</keyword>
<keyword id="KW-0547">Nucleotide-binding</keyword>
<keyword id="KW-0648">Protein biosynthesis</keyword>
<keyword id="KW-1185">Reference proteome</keyword>
<organism>
    <name type="scientific">Fusobacterium nucleatum subsp. nucleatum (strain ATCC 25586 / DSM 15643 / BCRC 10681 / CIP 101130 / JCM 8532 / KCTC 2640 / LMG 13131 / VPI 4355)</name>
    <dbReference type="NCBI Taxonomy" id="190304"/>
    <lineage>
        <taxon>Bacteria</taxon>
        <taxon>Fusobacteriati</taxon>
        <taxon>Fusobacteriota</taxon>
        <taxon>Fusobacteriia</taxon>
        <taxon>Fusobacteriales</taxon>
        <taxon>Fusobacteriaceae</taxon>
        <taxon>Fusobacterium</taxon>
    </lineage>
</organism>
<comment type="function">
    <text evidence="1">Allows the formation of correctly charged Asn-tRNA(Asn) or Gln-tRNA(Gln) through the transamidation of misacylated Asp-tRNA(Asn) or Glu-tRNA(Gln) in organisms which lack either or both of asparaginyl-tRNA or glutaminyl-tRNA synthetases. The reaction takes place in the presence of glutamine and ATP through an activated phospho-Asp-tRNA(Asn) or phospho-Glu-tRNA(Gln).</text>
</comment>
<comment type="catalytic activity">
    <reaction evidence="1">
        <text>L-glutamyl-tRNA(Gln) + L-glutamine + ATP + H2O = L-glutaminyl-tRNA(Gln) + L-glutamate + ADP + phosphate + H(+)</text>
        <dbReference type="Rhea" id="RHEA:17521"/>
        <dbReference type="Rhea" id="RHEA-COMP:9681"/>
        <dbReference type="Rhea" id="RHEA-COMP:9684"/>
        <dbReference type="ChEBI" id="CHEBI:15377"/>
        <dbReference type="ChEBI" id="CHEBI:15378"/>
        <dbReference type="ChEBI" id="CHEBI:29985"/>
        <dbReference type="ChEBI" id="CHEBI:30616"/>
        <dbReference type="ChEBI" id="CHEBI:43474"/>
        <dbReference type="ChEBI" id="CHEBI:58359"/>
        <dbReference type="ChEBI" id="CHEBI:78520"/>
        <dbReference type="ChEBI" id="CHEBI:78521"/>
        <dbReference type="ChEBI" id="CHEBI:456216"/>
    </reaction>
</comment>
<comment type="catalytic activity">
    <reaction evidence="1">
        <text>L-aspartyl-tRNA(Asn) + L-glutamine + ATP + H2O = L-asparaginyl-tRNA(Asn) + L-glutamate + ADP + phosphate + 2 H(+)</text>
        <dbReference type="Rhea" id="RHEA:14513"/>
        <dbReference type="Rhea" id="RHEA-COMP:9674"/>
        <dbReference type="Rhea" id="RHEA-COMP:9677"/>
        <dbReference type="ChEBI" id="CHEBI:15377"/>
        <dbReference type="ChEBI" id="CHEBI:15378"/>
        <dbReference type="ChEBI" id="CHEBI:29985"/>
        <dbReference type="ChEBI" id="CHEBI:30616"/>
        <dbReference type="ChEBI" id="CHEBI:43474"/>
        <dbReference type="ChEBI" id="CHEBI:58359"/>
        <dbReference type="ChEBI" id="CHEBI:78515"/>
        <dbReference type="ChEBI" id="CHEBI:78516"/>
        <dbReference type="ChEBI" id="CHEBI:456216"/>
    </reaction>
</comment>
<comment type="subunit">
    <text evidence="1">Heterotrimer of A, B and C subunits.</text>
</comment>
<comment type="similarity">
    <text evidence="1">Belongs to the GatB/GatE family. GatB subfamily.</text>
</comment>
<protein>
    <recommendedName>
        <fullName evidence="1">Aspartyl/glutamyl-tRNA(Asn/Gln) amidotransferase subunit B</fullName>
        <shortName evidence="1">Asp/Glu-ADT subunit B</shortName>
        <ecNumber evidence="1">6.3.5.-</ecNumber>
    </recommendedName>
</protein>